<proteinExistence type="inferred from homology"/>
<protein>
    <recommendedName>
        <fullName evidence="1">DNA ligase</fullName>
        <ecNumber evidence="1">6.5.1.2</ecNumber>
    </recommendedName>
    <alternativeName>
        <fullName evidence="1">Polydeoxyribonucleotide synthase [NAD(+)]</fullName>
    </alternativeName>
</protein>
<evidence type="ECO:0000255" key="1">
    <source>
        <dbReference type="HAMAP-Rule" id="MF_01588"/>
    </source>
</evidence>
<reference key="1">
    <citation type="journal article" date="2004" name="Nat. Biotechnol.">
        <title>The genome sequence of the capnophilic rumen bacterium Mannheimia succiniciproducens.</title>
        <authorList>
            <person name="Hong S.H."/>
            <person name="Kim J.S."/>
            <person name="Lee S.Y."/>
            <person name="In Y.H."/>
            <person name="Choi S.S."/>
            <person name="Rih J.-K."/>
            <person name="Kim C.H."/>
            <person name="Jeong H."/>
            <person name="Hur C.G."/>
            <person name="Kim J.J."/>
        </authorList>
    </citation>
    <scope>NUCLEOTIDE SEQUENCE [LARGE SCALE GENOMIC DNA]</scope>
    <source>
        <strain>KCTC 0769BP / MBEL55E</strain>
    </source>
</reference>
<feature type="chain" id="PRO_0000313301" description="DNA ligase">
    <location>
        <begin position="1"/>
        <end position="675"/>
    </location>
</feature>
<feature type="domain" description="BRCT" evidence="1">
    <location>
        <begin position="594"/>
        <end position="675"/>
    </location>
</feature>
<feature type="active site" description="N6-AMP-lysine intermediate" evidence="1">
    <location>
        <position position="118"/>
    </location>
</feature>
<feature type="binding site" evidence="1">
    <location>
        <begin position="34"/>
        <end position="38"/>
    </location>
    <ligand>
        <name>NAD(+)</name>
        <dbReference type="ChEBI" id="CHEBI:57540"/>
    </ligand>
</feature>
<feature type="binding site" evidence="1">
    <location>
        <begin position="83"/>
        <end position="84"/>
    </location>
    <ligand>
        <name>NAD(+)</name>
        <dbReference type="ChEBI" id="CHEBI:57540"/>
    </ligand>
</feature>
<feature type="binding site" evidence="1">
    <location>
        <position position="116"/>
    </location>
    <ligand>
        <name>NAD(+)</name>
        <dbReference type="ChEBI" id="CHEBI:57540"/>
    </ligand>
</feature>
<feature type="binding site" evidence="1">
    <location>
        <position position="139"/>
    </location>
    <ligand>
        <name>NAD(+)</name>
        <dbReference type="ChEBI" id="CHEBI:57540"/>
    </ligand>
</feature>
<feature type="binding site" evidence="1">
    <location>
        <position position="176"/>
    </location>
    <ligand>
        <name>NAD(+)</name>
        <dbReference type="ChEBI" id="CHEBI:57540"/>
    </ligand>
</feature>
<feature type="binding site" evidence="1">
    <location>
        <position position="293"/>
    </location>
    <ligand>
        <name>NAD(+)</name>
        <dbReference type="ChEBI" id="CHEBI:57540"/>
    </ligand>
</feature>
<feature type="binding site" evidence="1">
    <location>
        <position position="317"/>
    </location>
    <ligand>
        <name>NAD(+)</name>
        <dbReference type="ChEBI" id="CHEBI:57540"/>
    </ligand>
</feature>
<feature type="binding site" evidence="1">
    <location>
        <position position="411"/>
    </location>
    <ligand>
        <name>Zn(2+)</name>
        <dbReference type="ChEBI" id="CHEBI:29105"/>
    </ligand>
</feature>
<feature type="binding site" evidence="1">
    <location>
        <position position="414"/>
    </location>
    <ligand>
        <name>Zn(2+)</name>
        <dbReference type="ChEBI" id="CHEBI:29105"/>
    </ligand>
</feature>
<feature type="binding site" evidence="1">
    <location>
        <position position="429"/>
    </location>
    <ligand>
        <name>Zn(2+)</name>
        <dbReference type="ChEBI" id="CHEBI:29105"/>
    </ligand>
</feature>
<feature type="binding site" evidence="1">
    <location>
        <position position="435"/>
    </location>
    <ligand>
        <name>Zn(2+)</name>
        <dbReference type="ChEBI" id="CHEBI:29105"/>
    </ligand>
</feature>
<keyword id="KW-0227">DNA damage</keyword>
<keyword id="KW-0234">DNA repair</keyword>
<keyword id="KW-0235">DNA replication</keyword>
<keyword id="KW-0436">Ligase</keyword>
<keyword id="KW-0460">Magnesium</keyword>
<keyword id="KW-0464">Manganese</keyword>
<keyword id="KW-0479">Metal-binding</keyword>
<keyword id="KW-0520">NAD</keyword>
<keyword id="KW-0862">Zinc</keyword>
<gene>
    <name evidence="1" type="primary">ligA</name>
    <name type="ordered locus">MS1766</name>
</gene>
<organism>
    <name type="scientific">Mannheimia succiniciproducens (strain KCTC 0769BP / MBEL55E)</name>
    <dbReference type="NCBI Taxonomy" id="221988"/>
    <lineage>
        <taxon>Bacteria</taxon>
        <taxon>Pseudomonadati</taxon>
        <taxon>Pseudomonadota</taxon>
        <taxon>Gammaproteobacteria</taxon>
        <taxon>Pasteurellales</taxon>
        <taxon>Pasteurellaceae</taxon>
        <taxon>Basfia</taxon>
    </lineage>
</organism>
<comment type="function">
    <text evidence="1">DNA ligase that catalyzes the formation of phosphodiester linkages between 5'-phosphoryl and 3'-hydroxyl groups in double-stranded DNA using NAD as a coenzyme and as the energy source for the reaction. It is essential for DNA replication and repair of damaged DNA.</text>
</comment>
<comment type="catalytic activity">
    <reaction evidence="1">
        <text>NAD(+) + (deoxyribonucleotide)n-3'-hydroxyl + 5'-phospho-(deoxyribonucleotide)m = (deoxyribonucleotide)n+m + AMP + beta-nicotinamide D-nucleotide.</text>
        <dbReference type="EC" id="6.5.1.2"/>
    </reaction>
</comment>
<comment type="cofactor">
    <cofactor evidence="1">
        <name>Mg(2+)</name>
        <dbReference type="ChEBI" id="CHEBI:18420"/>
    </cofactor>
    <cofactor evidence="1">
        <name>Mn(2+)</name>
        <dbReference type="ChEBI" id="CHEBI:29035"/>
    </cofactor>
</comment>
<comment type="similarity">
    <text evidence="1">Belongs to the NAD-dependent DNA ligase family. LigA subfamily.</text>
</comment>
<name>DNLJ_MANSM</name>
<sequence length="675" mass="74740">MTIMDINQQIKQLRDTLRYHEYQYHVLDDPKIPDAEYDRLFHQLKALEQQHPELITADSPTQRVGAKPLAGFAQITHELPMLSLDNAFSDEEFNAFVKRIQDRLIVLPQPLTFCCEPKLDGLAVSIFYVNGVLTQAATRGDGTTGEDITLNIRTIRNIPLQLLTDNPPARLEVRGEVFMPHEGFNRLNERALEHGEKTFANPRNAAAGSLRQLDPKITSRRPLVFNAYSVGIAEGVELPATHYERLQWLKSVGIPVNSEVQLCDGSEKVLEFYRSMQQKRPTLGYDIDGTVLKINDIGLQRELGFISKAPRWAIAYKFPAQEELTRLNDVEFQVGRTGAITPVAKLAPVFVAGVTVSNATLHNGDEIARLDIAIGDTVVIRRAGDVIPQIIGVLHERRPANAQAIVFPTQCPVCGSKIVRIEGEAVARCTGGLFCDAQRKEALKHFVSRRAMDIDGVGAKLIEQLVDKELIRTPADLFKLDLITLMRLERMGEKSAQNALDSLEKAKNTTLARFIFALGIREVGEATALNLANHFKNLDALQAASPEQLQEVADVGEVVANRIYVFWREQHNIDAVNDLIAQGIHWETVETKEAGENPFKGKTVVLTGTLTQMGRNETKDLLQQLGAKAAGSVSAKTHFVIAGDNAGSKLTKAQELGVAVMSEAEFLAIVNAYKR</sequence>
<dbReference type="EC" id="6.5.1.2" evidence="1"/>
<dbReference type="EMBL" id="AE016827">
    <property type="protein sequence ID" value="AAU38373.1"/>
    <property type="molecule type" value="Genomic_DNA"/>
</dbReference>
<dbReference type="SMR" id="Q65RN7"/>
<dbReference type="STRING" id="221988.MS1766"/>
<dbReference type="KEGG" id="msu:MS1766"/>
<dbReference type="eggNOG" id="COG0272">
    <property type="taxonomic scope" value="Bacteria"/>
</dbReference>
<dbReference type="HOGENOM" id="CLU_007764_2_1_6"/>
<dbReference type="Proteomes" id="UP000000607">
    <property type="component" value="Chromosome"/>
</dbReference>
<dbReference type="GO" id="GO:0005829">
    <property type="term" value="C:cytosol"/>
    <property type="evidence" value="ECO:0007669"/>
    <property type="project" value="TreeGrafter"/>
</dbReference>
<dbReference type="GO" id="GO:0003677">
    <property type="term" value="F:DNA binding"/>
    <property type="evidence" value="ECO:0007669"/>
    <property type="project" value="InterPro"/>
</dbReference>
<dbReference type="GO" id="GO:0003911">
    <property type="term" value="F:DNA ligase (NAD+) activity"/>
    <property type="evidence" value="ECO:0007669"/>
    <property type="project" value="UniProtKB-UniRule"/>
</dbReference>
<dbReference type="GO" id="GO:0046872">
    <property type="term" value="F:metal ion binding"/>
    <property type="evidence" value="ECO:0007669"/>
    <property type="project" value="UniProtKB-KW"/>
</dbReference>
<dbReference type="GO" id="GO:0006281">
    <property type="term" value="P:DNA repair"/>
    <property type="evidence" value="ECO:0007669"/>
    <property type="project" value="UniProtKB-KW"/>
</dbReference>
<dbReference type="GO" id="GO:0006260">
    <property type="term" value="P:DNA replication"/>
    <property type="evidence" value="ECO:0007669"/>
    <property type="project" value="UniProtKB-KW"/>
</dbReference>
<dbReference type="CDD" id="cd17748">
    <property type="entry name" value="BRCT_DNA_ligase_like"/>
    <property type="match status" value="1"/>
</dbReference>
<dbReference type="CDD" id="cd00114">
    <property type="entry name" value="LIGANc"/>
    <property type="match status" value="1"/>
</dbReference>
<dbReference type="FunFam" id="1.10.150.20:FF:000006">
    <property type="entry name" value="DNA ligase"/>
    <property type="match status" value="1"/>
</dbReference>
<dbReference type="FunFam" id="1.10.150.20:FF:000007">
    <property type="entry name" value="DNA ligase"/>
    <property type="match status" value="1"/>
</dbReference>
<dbReference type="FunFam" id="1.10.287.610:FF:000002">
    <property type="entry name" value="DNA ligase"/>
    <property type="match status" value="1"/>
</dbReference>
<dbReference type="FunFam" id="2.40.50.140:FF:000012">
    <property type="entry name" value="DNA ligase"/>
    <property type="match status" value="1"/>
</dbReference>
<dbReference type="FunFam" id="3.30.470.30:FF:000001">
    <property type="entry name" value="DNA ligase"/>
    <property type="match status" value="1"/>
</dbReference>
<dbReference type="FunFam" id="6.20.10.30:FF:000001">
    <property type="entry name" value="DNA ligase"/>
    <property type="match status" value="1"/>
</dbReference>
<dbReference type="Gene3D" id="6.20.10.30">
    <property type="match status" value="1"/>
</dbReference>
<dbReference type="Gene3D" id="1.10.150.20">
    <property type="entry name" value="5' to 3' exonuclease, C-terminal subdomain"/>
    <property type="match status" value="2"/>
</dbReference>
<dbReference type="Gene3D" id="3.40.50.10190">
    <property type="entry name" value="BRCT domain"/>
    <property type="match status" value="1"/>
</dbReference>
<dbReference type="Gene3D" id="3.30.470.30">
    <property type="entry name" value="DNA ligase/mRNA capping enzyme"/>
    <property type="match status" value="1"/>
</dbReference>
<dbReference type="Gene3D" id="1.10.287.610">
    <property type="entry name" value="Helix hairpin bin"/>
    <property type="match status" value="1"/>
</dbReference>
<dbReference type="Gene3D" id="2.40.50.140">
    <property type="entry name" value="Nucleic acid-binding proteins"/>
    <property type="match status" value="1"/>
</dbReference>
<dbReference type="HAMAP" id="MF_01588">
    <property type="entry name" value="DNA_ligase_A"/>
    <property type="match status" value="1"/>
</dbReference>
<dbReference type="InterPro" id="IPR001357">
    <property type="entry name" value="BRCT_dom"/>
</dbReference>
<dbReference type="InterPro" id="IPR036420">
    <property type="entry name" value="BRCT_dom_sf"/>
</dbReference>
<dbReference type="InterPro" id="IPR041663">
    <property type="entry name" value="DisA/LigA_HHH"/>
</dbReference>
<dbReference type="InterPro" id="IPR001679">
    <property type="entry name" value="DNA_ligase"/>
</dbReference>
<dbReference type="InterPro" id="IPR018239">
    <property type="entry name" value="DNA_ligase_AS"/>
</dbReference>
<dbReference type="InterPro" id="IPR033136">
    <property type="entry name" value="DNA_ligase_CS"/>
</dbReference>
<dbReference type="InterPro" id="IPR013839">
    <property type="entry name" value="DNAligase_adenylation"/>
</dbReference>
<dbReference type="InterPro" id="IPR013840">
    <property type="entry name" value="DNAligase_N"/>
</dbReference>
<dbReference type="InterPro" id="IPR003583">
    <property type="entry name" value="Hlx-hairpin-Hlx_DNA-bd_motif"/>
</dbReference>
<dbReference type="InterPro" id="IPR012340">
    <property type="entry name" value="NA-bd_OB-fold"/>
</dbReference>
<dbReference type="InterPro" id="IPR004150">
    <property type="entry name" value="NAD_DNA_ligase_OB"/>
</dbReference>
<dbReference type="InterPro" id="IPR010994">
    <property type="entry name" value="RuvA_2-like"/>
</dbReference>
<dbReference type="InterPro" id="IPR004149">
    <property type="entry name" value="Znf_DNAligase_C4"/>
</dbReference>
<dbReference type="NCBIfam" id="TIGR00575">
    <property type="entry name" value="dnlj"/>
    <property type="match status" value="1"/>
</dbReference>
<dbReference type="NCBIfam" id="NF005932">
    <property type="entry name" value="PRK07956.1"/>
    <property type="match status" value="1"/>
</dbReference>
<dbReference type="PANTHER" id="PTHR23389">
    <property type="entry name" value="CHROMOSOME TRANSMISSION FIDELITY FACTOR 18"/>
    <property type="match status" value="1"/>
</dbReference>
<dbReference type="PANTHER" id="PTHR23389:SF9">
    <property type="entry name" value="DNA LIGASE"/>
    <property type="match status" value="1"/>
</dbReference>
<dbReference type="Pfam" id="PF00533">
    <property type="entry name" value="BRCT"/>
    <property type="match status" value="1"/>
</dbReference>
<dbReference type="Pfam" id="PF01653">
    <property type="entry name" value="DNA_ligase_aden"/>
    <property type="match status" value="1"/>
</dbReference>
<dbReference type="Pfam" id="PF03120">
    <property type="entry name" value="DNA_ligase_OB"/>
    <property type="match status" value="1"/>
</dbReference>
<dbReference type="Pfam" id="PF03119">
    <property type="entry name" value="DNA_ligase_ZBD"/>
    <property type="match status" value="1"/>
</dbReference>
<dbReference type="Pfam" id="PF12826">
    <property type="entry name" value="HHH_2"/>
    <property type="match status" value="1"/>
</dbReference>
<dbReference type="Pfam" id="PF14520">
    <property type="entry name" value="HHH_5"/>
    <property type="match status" value="1"/>
</dbReference>
<dbReference type="Pfam" id="PF22745">
    <property type="entry name" value="Nlig-Ia"/>
    <property type="match status" value="1"/>
</dbReference>
<dbReference type="PIRSF" id="PIRSF001604">
    <property type="entry name" value="LigA"/>
    <property type="match status" value="1"/>
</dbReference>
<dbReference type="SMART" id="SM00292">
    <property type="entry name" value="BRCT"/>
    <property type="match status" value="1"/>
</dbReference>
<dbReference type="SMART" id="SM00278">
    <property type="entry name" value="HhH1"/>
    <property type="match status" value="4"/>
</dbReference>
<dbReference type="SMART" id="SM00532">
    <property type="entry name" value="LIGANc"/>
    <property type="match status" value="1"/>
</dbReference>
<dbReference type="SUPFAM" id="SSF52113">
    <property type="entry name" value="BRCT domain"/>
    <property type="match status" value="1"/>
</dbReference>
<dbReference type="SUPFAM" id="SSF56091">
    <property type="entry name" value="DNA ligase/mRNA capping enzyme, catalytic domain"/>
    <property type="match status" value="1"/>
</dbReference>
<dbReference type="SUPFAM" id="SSF50249">
    <property type="entry name" value="Nucleic acid-binding proteins"/>
    <property type="match status" value="1"/>
</dbReference>
<dbReference type="SUPFAM" id="SSF47781">
    <property type="entry name" value="RuvA domain 2-like"/>
    <property type="match status" value="1"/>
</dbReference>
<dbReference type="PROSITE" id="PS50172">
    <property type="entry name" value="BRCT"/>
    <property type="match status" value="1"/>
</dbReference>
<dbReference type="PROSITE" id="PS01055">
    <property type="entry name" value="DNA_LIGASE_N1"/>
    <property type="match status" value="1"/>
</dbReference>
<dbReference type="PROSITE" id="PS01056">
    <property type="entry name" value="DNA_LIGASE_N2"/>
    <property type="match status" value="1"/>
</dbReference>
<accession>Q65RN7</accession>